<reference key="1">
    <citation type="journal article" date="2001" name="Proc. Natl. Acad. Sci. U.S.A.">
        <title>The complete genome of the crenarchaeon Sulfolobus solfataricus P2.</title>
        <authorList>
            <person name="She Q."/>
            <person name="Singh R.K."/>
            <person name="Confalonieri F."/>
            <person name="Zivanovic Y."/>
            <person name="Allard G."/>
            <person name="Awayez M.J."/>
            <person name="Chan-Weiher C.C.-Y."/>
            <person name="Clausen I.G."/>
            <person name="Curtis B.A."/>
            <person name="De Moors A."/>
            <person name="Erauso G."/>
            <person name="Fletcher C."/>
            <person name="Gordon P.M.K."/>
            <person name="Heikamp-de Jong I."/>
            <person name="Jeffries A.C."/>
            <person name="Kozera C.J."/>
            <person name="Medina N."/>
            <person name="Peng X."/>
            <person name="Thi-Ngoc H.P."/>
            <person name="Redder P."/>
            <person name="Schenk M.E."/>
            <person name="Theriault C."/>
            <person name="Tolstrup N."/>
            <person name="Charlebois R.L."/>
            <person name="Doolittle W.F."/>
            <person name="Duguet M."/>
            <person name="Gaasterland T."/>
            <person name="Garrett R.A."/>
            <person name="Ragan M.A."/>
            <person name="Sensen C.W."/>
            <person name="Van der Oost J."/>
        </authorList>
    </citation>
    <scope>NUCLEOTIDE SEQUENCE [LARGE SCALE GENOMIC DNA]</scope>
    <source>
        <strain>ATCC 35092 / DSM 1617 / JCM 11322 / P2</strain>
    </source>
</reference>
<reference key="2">
    <citation type="journal article" date="2002" name="J. Bacteriol.">
        <title>Novel medium-chain prenyl diphosphate synthase from the thermoacidophilic archaeon Sulfolobus solfataricus.</title>
        <authorList>
            <person name="Hemmi H."/>
            <person name="Ikejiri S."/>
            <person name="Yamashita S."/>
            <person name="Nishino T."/>
        </authorList>
    </citation>
    <scope>FUNCTION AS A HEXAPRENYL PYROPHOSPHATE SYNTHASE</scope>
    <scope>CATALYTIC ACTIVITY</scope>
    <scope>BIOPHYSICOCHEMICAL PROPERTIES</scope>
    <scope>SUBUNIT</scope>
    <scope>COFACTOR</scope>
</reference>
<reference evidence="7 8" key="3">
    <citation type="journal article" date="2005" name="J. Bacteriol.">
        <title>Homodimeric hexaprenyl pyrophosphate synthase from the thermoacidophilic crenarchaeon Sulfolobus solfataricus displays asymmetric subunit structures.</title>
        <authorList>
            <person name="Sun H.Y."/>
            <person name="Ko T.P."/>
            <person name="Kuo C.J."/>
            <person name="Guo R.T."/>
            <person name="Chou C.C."/>
            <person name="Liang P.H."/>
            <person name="Wang A.H."/>
        </authorList>
    </citation>
    <scope>X-RAY CRYSTALLOGRAPHY (2.40 ANGSTROMS) OF MUTANT CYS-81</scope>
    <scope>MUTAGENESIS OF TYR-124; LEU-164 AND TYR-174</scope>
    <scope>FUNCTION</scope>
    <scope>CATALYTIC ACTIVITY</scope>
    <scope>SUBSTRATE SPECIFICITY</scope>
    <scope>SUBUNIT</scope>
</reference>
<keyword id="KW-0002">3D-structure</keyword>
<keyword id="KW-0414">Isoprene biosynthesis</keyword>
<keyword id="KW-0460">Magnesium</keyword>
<keyword id="KW-0479">Metal-binding</keyword>
<keyword id="KW-1185">Reference proteome</keyword>
<keyword id="KW-0808">Transferase</keyword>
<name>HEXPP_SACS2</name>
<organism>
    <name type="scientific">Saccharolobus solfataricus (strain ATCC 35092 / DSM 1617 / JCM 11322 / P2)</name>
    <name type="common">Sulfolobus solfataricus</name>
    <dbReference type="NCBI Taxonomy" id="273057"/>
    <lineage>
        <taxon>Archaea</taxon>
        <taxon>Thermoproteota</taxon>
        <taxon>Thermoprotei</taxon>
        <taxon>Sulfolobales</taxon>
        <taxon>Sulfolobaceae</taxon>
        <taxon>Saccharolobus</taxon>
    </lineage>
</organism>
<evidence type="ECO:0000250" key="1">
    <source>
        <dbReference type="UniProtKB" id="P14324"/>
    </source>
</evidence>
<evidence type="ECO:0000250" key="2">
    <source>
        <dbReference type="UniProtKB" id="Q12051"/>
    </source>
</evidence>
<evidence type="ECO:0000269" key="3">
    <source>
    </source>
</evidence>
<evidence type="ECO:0000269" key="4">
    <source>
    </source>
</evidence>
<evidence type="ECO:0000305" key="5"/>
<evidence type="ECO:0000305" key="6">
    <source>
    </source>
</evidence>
<evidence type="ECO:0007744" key="7">
    <source>
        <dbReference type="PDB" id="2AZJ"/>
    </source>
</evidence>
<evidence type="ECO:0007744" key="8">
    <source>
        <dbReference type="PDB" id="2AZK"/>
    </source>
</evidence>
<evidence type="ECO:0007829" key="9">
    <source>
        <dbReference type="PDB" id="2AZJ"/>
    </source>
</evidence>
<gene>
    <name type="primary">gdS-2</name>
    <name type="ordered locus">SSO2345</name>
</gene>
<feature type="chain" id="PRO_0000418599" description="Hexaprenyl pyrophosphate synthase">
    <location>
        <begin position="1"/>
        <end position="281"/>
    </location>
</feature>
<feature type="binding site" evidence="1">
    <location>
        <position position="42"/>
    </location>
    <ligand>
        <name>isopentenyl diphosphate</name>
        <dbReference type="ChEBI" id="CHEBI:128769"/>
    </ligand>
</feature>
<feature type="binding site" evidence="1">
    <location>
        <position position="45"/>
    </location>
    <ligand>
        <name>isopentenyl diphosphate</name>
        <dbReference type="ChEBI" id="CHEBI:128769"/>
    </ligand>
</feature>
<feature type="binding site" evidence="2">
    <location>
        <position position="74"/>
    </location>
    <ligand>
        <name>isopentenyl diphosphate</name>
        <dbReference type="ChEBI" id="CHEBI:128769"/>
    </ligand>
</feature>
<feature type="binding site" evidence="1">
    <location>
        <position position="81"/>
    </location>
    <ligand>
        <name>Mg(2+)</name>
        <dbReference type="ChEBI" id="CHEBI:18420"/>
        <label>1</label>
    </ligand>
</feature>
<feature type="binding site" evidence="1">
    <location>
        <position position="81"/>
    </location>
    <ligand>
        <name>Mg(2+)</name>
        <dbReference type="ChEBI" id="CHEBI:18420"/>
        <label>2</label>
    </ligand>
</feature>
<feature type="binding site" evidence="1">
    <location>
        <position position="85"/>
    </location>
    <ligand>
        <name>Mg(2+)</name>
        <dbReference type="ChEBI" id="CHEBI:18420"/>
        <label>1</label>
    </ligand>
</feature>
<feature type="binding site" evidence="1">
    <location>
        <position position="85"/>
    </location>
    <ligand>
        <name>Mg(2+)</name>
        <dbReference type="ChEBI" id="CHEBI:18420"/>
        <label>2</label>
    </ligand>
</feature>
<feature type="binding site" evidence="1">
    <location>
        <position position="91"/>
    </location>
    <ligand>
        <name>isopentenyl diphosphate</name>
        <dbReference type="ChEBI" id="CHEBI:128769"/>
    </ligand>
</feature>
<feature type="mutagenesis site" description="Generates the same C30 product as the wild-type." evidence="4">
    <original>Y</original>
    <variation>A</variation>
    <location>
        <position position="124"/>
    </location>
</feature>
<feature type="mutagenesis site" description="Generates only one C5-prenyl unit longer C35 product." evidence="4">
    <original>L</original>
    <variation>A</variation>
    <location>
        <position position="164"/>
    </location>
</feature>
<feature type="mutagenesis site" description="Generates the same C30 product as the wild-type." evidence="4">
    <original>Y</original>
    <variation>A</variation>
    <location>
        <position position="174"/>
    </location>
</feature>
<feature type="helix" evidence="9">
    <location>
        <begin position="2"/>
        <end position="24"/>
    </location>
</feature>
<feature type="turn" evidence="9">
    <location>
        <begin position="28"/>
        <end position="30"/>
    </location>
</feature>
<feature type="helix" evidence="9">
    <location>
        <begin position="31"/>
        <end position="38"/>
    </location>
</feature>
<feature type="helix" evidence="9">
    <location>
        <begin position="44"/>
        <end position="55"/>
    </location>
</feature>
<feature type="helix" evidence="9">
    <location>
        <begin position="60"/>
        <end position="63"/>
    </location>
</feature>
<feature type="helix" evidence="9">
    <location>
        <begin position="64"/>
        <end position="84"/>
    </location>
</feature>
<feature type="strand" evidence="9">
    <location>
        <begin position="89"/>
        <end position="94"/>
    </location>
</feature>
<feature type="helix" evidence="9">
    <location>
        <begin position="96"/>
        <end position="124"/>
    </location>
</feature>
<feature type="helix" evidence="9">
    <location>
        <begin position="126"/>
        <end position="145"/>
    </location>
</feature>
<feature type="turn" evidence="9">
    <location>
        <begin position="146"/>
        <end position="150"/>
    </location>
</feature>
<feature type="helix" evidence="9">
    <location>
        <begin position="153"/>
        <end position="160"/>
    </location>
</feature>
<feature type="helix" evidence="9">
    <location>
        <begin position="162"/>
        <end position="175"/>
    </location>
</feature>
<feature type="helix" evidence="9">
    <location>
        <begin position="179"/>
        <end position="181"/>
    </location>
</feature>
<feature type="helix" evidence="9">
    <location>
        <begin position="182"/>
        <end position="205"/>
    </location>
</feature>
<feature type="turn" evidence="9">
    <location>
        <begin position="210"/>
        <end position="212"/>
    </location>
</feature>
<feature type="helix" evidence="9">
    <location>
        <begin position="217"/>
        <end position="220"/>
    </location>
</feature>
<feature type="helix" evidence="9">
    <location>
        <begin position="221"/>
        <end position="224"/>
    </location>
</feature>
<feature type="turn" evidence="9">
    <location>
        <begin position="225"/>
        <end position="227"/>
    </location>
</feature>
<feature type="helix" evidence="9">
    <location>
        <begin position="229"/>
        <end position="249"/>
    </location>
</feature>
<feature type="helix" evidence="9">
    <location>
        <begin position="255"/>
        <end position="257"/>
    </location>
</feature>
<feature type="helix" evidence="9">
    <location>
        <begin position="258"/>
        <end position="262"/>
    </location>
</feature>
<feature type="helix" evidence="9">
    <location>
        <begin position="264"/>
        <end position="274"/>
    </location>
</feature>
<comment type="function">
    <text evidence="3 4">Catalyzes consecutive E-type condensation of two isopentenyl pyrophosphate (IPP) molecules with an allylic substrate such as geranylgeranyl diphosphate (GGPP), farnesyl diphosphate (FPP) or geranyl diphosphate (GPP) to yield the medium-chain product trans-C30-hexaprenyl pyrophosphate (HexPP). GGPP is the physiological substrate.</text>
</comment>
<comment type="catalytic activity">
    <reaction evidence="3 4">
        <text>2 isopentenyl diphosphate + (2E,6E,10E)-geranylgeranyl diphosphate = all-trans-hexaprenyl diphosphate + 2 diphosphate</text>
        <dbReference type="Rhea" id="RHEA:27555"/>
        <dbReference type="ChEBI" id="CHEBI:33019"/>
        <dbReference type="ChEBI" id="CHEBI:58179"/>
        <dbReference type="ChEBI" id="CHEBI:58756"/>
        <dbReference type="ChEBI" id="CHEBI:128769"/>
        <dbReference type="EC" id="2.5.1.82"/>
    </reaction>
</comment>
<comment type="cofactor">
    <cofactor evidence="3">
        <name>Mg(2+)</name>
        <dbReference type="ChEBI" id="CHEBI:18420"/>
    </cofactor>
    <text evidence="1">Binds 2 Mg(2+) ions per subunit.</text>
</comment>
<comment type="biophysicochemical properties">
    <phDependence>
        <text evidence="3">Optimum pH is 6.</text>
    </phDependence>
    <temperatureDependence>
        <text evidence="3">Highly thermostable, remains fully active after 2 hours at 80 degrees Celsius.</text>
    </temperatureDependence>
</comment>
<comment type="subunit">
    <text evidence="4 6">Homodimer.</text>
</comment>
<comment type="similarity">
    <text evidence="5">Belongs to the FPP/GGPP synthase family.</text>
</comment>
<sequence length="281" mass="32275">MSIIEFWLEAKATIDRLIEQFLNSNRDWDLVDISSYILKDGKRFRGTLNMFFTVALGGDIKDSYGGALAIEILHSASLALDDIVDLDATRRGDKAAWVVYGNRKVIFITNYLIPTALRIIQTSYGDDALNTSIELWKDTSVGALRDMYDNSDYIRTIELKTGSLFKLSTVLSAYASKHYNTKQQMLDVGKYLGIIYQVIDDFVDYKTKKVEEIDGSAKQLFKYYREGKLEEYVRSVYLEYKQKYDELISNIPFQSKYLSEIRSLPEFLANGLLKEANIDKI</sequence>
<accession>Q97W92</accession>
<protein>
    <recommendedName>
        <fullName>Hexaprenyl pyrophosphate synthase</fullName>
        <shortName>HexPP</shortName>
        <ecNumber evidence="3 4">2.5.1.82</ecNumber>
    </recommendedName>
    <alternativeName>
        <fullName>Medium-chain HexPP</fullName>
    </alternativeName>
</protein>
<proteinExistence type="evidence at protein level"/>
<dbReference type="EC" id="2.5.1.82" evidence="3 4"/>
<dbReference type="EMBL" id="AE006641">
    <property type="protein sequence ID" value="AAK42496.1"/>
    <property type="molecule type" value="Genomic_DNA"/>
</dbReference>
<dbReference type="PIR" id="A99405">
    <property type="entry name" value="A99405"/>
</dbReference>
<dbReference type="RefSeq" id="WP_009989514.1">
    <property type="nucleotide sequence ID" value="NC_002754.1"/>
</dbReference>
<dbReference type="PDB" id="2AZJ">
    <property type="method" value="X-ray"/>
    <property type="resolution" value="2.40 A"/>
    <property type="chains" value="A/B=1-281"/>
</dbReference>
<dbReference type="PDB" id="2AZK">
    <property type="method" value="X-ray"/>
    <property type="resolution" value="2.70 A"/>
    <property type="chains" value="A/B=1-281"/>
</dbReference>
<dbReference type="PDBsum" id="2AZJ"/>
<dbReference type="PDBsum" id="2AZK"/>
<dbReference type="SMR" id="Q97W92"/>
<dbReference type="FunCoup" id="Q97W92">
    <property type="interactions" value="16"/>
</dbReference>
<dbReference type="STRING" id="273057.SSO2345"/>
<dbReference type="PaxDb" id="273057-SSO2345"/>
<dbReference type="EnsemblBacteria" id="AAK42496">
    <property type="protein sequence ID" value="AAK42496"/>
    <property type="gene ID" value="SSO2345"/>
</dbReference>
<dbReference type="GeneID" id="44128070"/>
<dbReference type="KEGG" id="sso:SSO2345"/>
<dbReference type="PATRIC" id="fig|273057.12.peg.2429"/>
<dbReference type="eggNOG" id="arCOG01727">
    <property type="taxonomic scope" value="Archaea"/>
</dbReference>
<dbReference type="HOGENOM" id="CLU_014015_5_0_2"/>
<dbReference type="InParanoid" id="Q97W92"/>
<dbReference type="PhylomeDB" id="Q97W92"/>
<dbReference type="BioCyc" id="MetaCyc:MONOMER-15679"/>
<dbReference type="BRENDA" id="2.5.1.82">
    <property type="organism ID" value="6163"/>
</dbReference>
<dbReference type="EvolutionaryTrace" id="Q97W92"/>
<dbReference type="Proteomes" id="UP000001974">
    <property type="component" value="Chromosome"/>
</dbReference>
<dbReference type="GO" id="GO:0052922">
    <property type="term" value="F:hexaprenyl diphosphate synthase (geranylgeranyl-diphosphate specific) activity"/>
    <property type="evidence" value="ECO:0000314"/>
    <property type="project" value="UniProtKB"/>
</dbReference>
<dbReference type="GO" id="GO:0046872">
    <property type="term" value="F:metal ion binding"/>
    <property type="evidence" value="ECO:0007669"/>
    <property type="project" value="UniProtKB-KW"/>
</dbReference>
<dbReference type="GO" id="GO:0004659">
    <property type="term" value="F:prenyltransferase activity"/>
    <property type="evidence" value="ECO:0000318"/>
    <property type="project" value="GO_Central"/>
</dbReference>
<dbReference type="GO" id="GO:0008299">
    <property type="term" value="P:isoprenoid biosynthetic process"/>
    <property type="evidence" value="ECO:0000314"/>
    <property type="project" value="UniProtKB"/>
</dbReference>
<dbReference type="Gene3D" id="1.10.600.10">
    <property type="entry name" value="Farnesyl Diphosphate Synthase"/>
    <property type="match status" value="1"/>
</dbReference>
<dbReference type="InterPro" id="IPR053655">
    <property type="entry name" value="HexPP_synthase"/>
</dbReference>
<dbReference type="InterPro" id="IPR008949">
    <property type="entry name" value="Isoprenoid_synthase_dom_sf"/>
</dbReference>
<dbReference type="InterPro" id="IPR000092">
    <property type="entry name" value="Polyprenyl_synt"/>
</dbReference>
<dbReference type="InterPro" id="IPR033749">
    <property type="entry name" value="Polyprenyl_synt_CS"/>
</dbReference>
<dbReference type="NCBIfam" id="NF040936">
    <property type="entry name" value="hexpp_archaea"/>
    <property type="match status" value="1"/>
</dbReference>
<dbReference type="PANTHER" id="PTHR12001">
    <property type="entry name" value="GERANYLGERANYL PYROPHOSPHATE SYNTHASE"/>
    <property type="match status" value="1"/>
</dbReference>
<dbReference type="PANTHER" id="PTHR12001:SF85">
    <property type="entry name" value="SHORT CHAIN ISOPRENYL DIPHOSPHATE SYNTHASE"/>
    <property type="match status" value="1"/>
</dbReference>
<dbReference type="Pfam" id="PF00348">
    <property type="entry name" value="polyprenyl_synt"/>
    <property type="match status" value="1"/>
</dbReference>
<dbReference type="SFLD" id="SFLDS00005">
    <property type="entry name" value="Isoprenoid_Synthase_Type_I"/>
    <property type="match status" value="1"/>
</dbReference>
<dbReference type="SFLD" id="SFLDG01017">
    <property type="entry name" value="Polyprenyl_Transferase_Like"/>
    <property type="match status" value="1"/>
</dbReference>
<dbReference type="SUPFAM" id="SSF48576">
    <property type="entry name" value="Terpenoid synthases"/>
    <property type="match status" value="1"/>
</dbReference>
<dbReference type="PROSITE" id="PS00444">
    <property type="entry name" value="POLYPRENYL_SYNTHASE_2"/>
    <property type="match status" value="1"/>
</dbReference>